<name>CDON_HUMAN</name>
<gene>
    <name type="primary">CDON</name>
    <name type="synonym">CDO</name>
</gene>
<dbReference type="EMBL" id="AF004841">
    <property type="protein sequence ID" value="AAC34901.2"/>
    <property type="molecule type" value="mRNA"/>
</dbReference>
<dbReference type="EMBL" id="AP000821">
    <property type="status" value="NOT_ANNOTATED_CDS"/>
    <property type="molecule type" value="Genomic_DNA"/>
</dbReference>
<dbReference type="EMBL" id="AP000842">
    <property type="status" value="NOT_ANNOTATED_CDS"/>
    <property type="molecule type" value="Genomic_DNA"/>
</dbReference>
<dbReference type="EMBL" id="BC098583">
    <property type="protein sequence ID" value="AAH98583.1"/>
    <property type="molecule type" value="mRNA"/>
</dbReference>
<dbReference type="CCDS" id="CCDS58192.1">
    <molecule id="Q4KMG0-1"/>
</dbReference>
<dbReference type="CCDS" id="CCDS8468.1">
    <molecule id="Q4KMG0-2"/>
</dbReference>
<dbReference type="PIR" id="T03097">
    <property type="entry name" value="T03097"/>
</dbReference>
<dbReference type="RefSeq" id="NP_001230526.1">
    <molecule id="Q4KMG0-1"/>
    <property type="nucleotide sequence ID" value="NM_001243597.2"/>
</dbReference>
<dbReference type="RefSeq" id="NP_001365893.1">
    <molecule id="Q4KMG0-2"/>
    <property type="nucleotide sequence ID" value="NM_001378964.1"/>
</dbReference>
<dbReference type="RefSeq" id="NP_058648.4">
    <molecule id="Q4KMG0-2"/>
    <property type="nucleotide sequence ID" value="NM_016952.4"/>
</dbReference>
<dbReference type="RefSeq" id="XP_011541164.1">
    <molecule id="Q4KMG0-1"/>
    <property type="nucleotide sequence ID" value="XM_011542862.4"/>
</dbReference>
<dbReference type="RefSeq" id="XP_011541165.1">
    <molecule id="Q4KMG0-1"/>
    <property type="nucleotide sequence ID" value="XM_011542863.3"/>
</dbReference>
<dbReference type="RefSeq" id="XP_011541166.1">
    <molecule id="Q4KMG0-1"/>
    <property type="nucleotide sequence ID" value="XM_011542864.3"/>
</dbReference>
<dbReference type="RefSeq" id="XP_011541167.1">
    <molecule id="Q4KMG0-1"/>
    <property type="nucleotide sequence ID" value="XM_011542865.3"/>
</dbReference>
<dbReference type="RefSeq" id="XP_011541168.1">
    <property type="nucleotide sequence ID" value="XM_011542866.2"/>
</dbReference>
<dbReference type="RefSeq" id="XP_016873362.1">
    <molecule id="Q4KMG0-1"/>
    <property type="nucleotide sequence ID" value="XM_017017873.2"/>
</dbReference>
<dbReference type="RefSeq" id="XP_047283016.1">
    <molecule id="Q4KMG0-1"/>
    <property type="nucleotide sequence ID" value="XM_047427060.1"/>
</dbReference>
<dbReference type="RefSeq" id="XP_047283017.1">
    <molecule id="Q4KMG0-2"/>
    <property type="nucleotide sequence ID" value="XM_047427061.1"/>
</dbReference>
<dbReference type="RefSeq" id="XP_047283018.1">
    <molecule id="Q4KMG0-2"/>
    <property type="nucleotide sequence ID" value="XM_047427062.1"/>
</dbReference>
<dbReference type="RefSeq" id="XP_047283019.1">
    <molecule id="Q4KMG0-2"/>
    <property type="nucleotide sequence ID" value="XM_047427063.1"/>
</dbReference>
<dbReference type="RefSeq" id="XP_047283020.1">
    <molecule id="Q4KMG0-2"/>
    <property type="nucleotide sequence ID" value="XM_047427064.1"/>
</dbReference>
<dbReference type="PDB" id="3D1M">
    <property type="method" value="X-ray"/>
    <property type="resolution" value="1.70 A"/>
    <property type="chains" value="C/D=826-924"/>
</dbReference>
<dbReference type="PDB" id="3N1F">
    <property type="method" value="X-ray"/>
    <property type="resolution" value="1.60 A"/>
    <property type="chains" value="C/D=826-924"/>
</dbReference>
<dbReference type="PDB" id="3N1Q">
    <property type="method" value="X-ray"/>
    <property type="resolution" value="2.89 A"/>
    <property type="chains" value="C/D/F=826-924"/>
</dbReference>
<dbReference type="PDBsum" id="3D1M"/>
<dbReference type="PDBsum" id="3N1F"/>
<dbReference type="PDBsum" id="3N1Q"/>
<dbReference type="SMR" id="Q4KMG0"/>
<dbReference type="BioGRID" id="119165">
    <property type="interactions" value="23"/>
</dbReference>
<dbReference type="CORUM" id="Q4KMG0"/>
<dbReference type="DIP" id="DIP-57226N"/>
<dbReference type="FunCoup" id="Q4KMG0">
    <property type="interactions" value="427"/>
</dbReference>
<dbReference type="IntAct" id="Q4KMG0">
    <property type="interactions" value="14"/>
</dbReference>
<dbReference type="MINT" id="Q4KMG0"/>
<dbReference type="STRING" id="9606.ENSP00000376458"/>
<dbReference type="GlyCosmos" id="Q4KMG0">
    <property type="glycosylation" value="9 sites, No reported glycans"/>
</dbReference>
<dbReference type="GlyGen" id="Q4KMG0">
    <property type="glycosylation" value="11 sites, 2 N-linked glycans (2 sites), 1 O-linked glycan (2 sites)"/>
</dbReference>
<dbReference type="iPTMnet" id="Q4KMG0"/>
<dbReference type="PhosphoSitePlus" id="Q4KMG0"/>
<dbReference type="BioMuta" id="CDON"/>
<dbReference type="DMDM" id="308153422"/>
<dbReference type="jPOST" id="Q4KMG0"/>
<dbReference type="MassIVE" id="Q4KMG0"/>
<dbReference type="PaxDb" id="9606-ENSP00000376458"/>
<dbReference type="PeptideAtlas" id="Q4KMG0"/>
<dbReference type="ProteomicsDB" id="62193">
    <molecule id="Q4KMG0-1"/>
</dbReference>
<dbReference type="ProteomicsDB" id="62194">
    <molecule id="Q4KMG0-2"/>
</dbReference>
<dbReference type="Pumba" id="Q4KMG0"/>
<dbReference type="Antibodypedia" id="2227">
    <property type="antibodies" value="200 antibodies from 30 providers"/>
</dbReference>
<dbReference type="DNASU" id="50937"/>
<dbReference type="Ensembl" id="ENST00000263577.11">
    <molecule id="Q4KMG0-2"/>
    <property type="protein sequence ID" value="ENSP00000263577.7"/>
    <property type="gene ID" value="ENSG00000064309.16"/>
</dbReference>
<dbReference type="Ensembl" id="ENST00000392693.7">
    <molecule id="Q4KMG0-1"/>
    <property type="protein sequence ID" value="ENSP00000376458.3"/>
    <property type="gene ID" value="ENSG00000064309.16"/>
</dbReference>
<dbReference type="Ensembl" id="ENST00000531738.6">
    <molecule id="Q4KMG0-2"/>
    <property type="protein sequence ID" value="ENSP00000432901.2"/>
    <property type="gene ID" value="ENSG00000064309.16"/>
</dbReference>
<dbReference type="Ensembl" id="ENST00000684078.1">
    <molecule id="Q4KMG0-1"/>
    <property type="protein sequence ID" value="ENSP00000507318.1"/>
    <property type="gene ID" value="ENSG00000064309.16"/>
</dbReference>
<dbReference type="GeneID" id="50937"/>
<dbReference type="KEGG" id="hsa:50937"/>
<dbReference type="MANE-Select" id="ENST00000531738.6">
    <molecule id="Q4KMG0-2"/>
    <property type="protein sequence ID" value="ENSP00000432901.2"/>
    <property type="RefSeq nucleotide sequence ID" value="NM_001378964.1"/>
    <property type="RefSeq protein sequence ID" value="NP_001365893.1"/>
</dbReference>
<dbReference type="UCSC" id="uc001qdc.5">
    <molecule id="Q4KMG0-1"/>
    <property type="organism name" value="human"/>
</dbReference>
<dbReference type="AGR" id="HGNC:17104"/>
<dbReference type="CTD" id="50937"/>
<dbReference type="DisGeNET" id="50937"/>
<dbReference type="GeneCards" id="CDON"/>
<dbReference type="GeneReviews" id="CDON"/>
<dbReference type="HGNC" id="HGNC:17104">
    <property type="gene designation" value="CDON"/>
</dbReference>
<dbReference type="HPA" id="ENSG00000064309">
    <property type="expression patterns" value="Low tissue specificity"/>
</dbReference>
<dbReference type="MalaCards" id="CDON"/>
<dbReference type="MIM" id="608707">
    <property type="type" value="gene"/>
</dbReference>
<dbReference type="MIM" id="614226">
    <property type="type" value="phenotype"/>
</dbReference>
<dbReference type="neXtProt" id="NX_Q4KMG0"/>
<dbReference type="OpenTargets" id="ENSG00000064309"/>
<dbReference type="Orphanet" id="93925">
    <property type="disease" value="Alobar holoprosencephaly"/>
</dbReference>
<dbReference type="Orphanet" id="93924">
    <property type="disease" value="Lobar holoprosencephaly"/>
</dbReference>
<dbReference type="Orphanet" id="280200">
    <property type="disease" value="Microform holoprosencephaly"/>
</dbReference>
<dbReference type="Orphanet" id="93926">
    <property type="disease" value="Midline interhemispheric variant of holoprosencephaly"/>
</dbReference>
<dbReference type="Orphanet" id="95496">
    <property type="disease" value="Pituitary stalk interruption syndrome"/>
</dbReference>
<dbReference type="Orphanet" id="220386">
    <property type="disease" value="Semilobar holoprosencephaly"/>
</dbReference>
<dbReference type="Orphanet" id="280195">
    <property type="disease" value="Septopreoptic holoprosencephaly"/>
</dbReference>
<dbReference type="PharmGKB" id="PA26328"/>
<dbReference type="VEuPathDB" id="HostDB:ENSG00000064309"/>
<dbReference type="eggNOG" id="ENOG502QT4P">
    <property type="taxonomic scope" value="Eukaryota"/>
</dbReference>
<dbReference type="GeneTree" id="ENSGT00940000157114"/>
<dbReference type="HOGENOM" id="CLU_008503_0_0_1"/>
<dbReference type="InParanoid" id="Q4KMG0"/>
<dbReference type="OMA" id="NGCAHLH"/>
<dbReference type="OrthoDB" id="9998697at2759"/>
<dbReference type="PAN-GO" id="Q4KMG0">
    <property type="GO annotations" value="2 GO annotations based on evolutionary models"/>
</dbReference>
<dbReference type="PhylomeDB" id="Q4KMG0"/>
<dbReference type="TreeFam" id="TF332268"/>
<dbReference type="PathwayCommons" id="Q4KMG0"/>
<dbReference type="Reactome" id="R-HSA-525793">
    <property type="pathway name" value="Myogenesis"/>
</dbReference>
<dbReference type="Reactome" id="R-HSA-5632681">
    <property type="pathway name" value="Ligand-receptor interactions"/>
</dbReference>
<dbReference type="Reactome" id="R-HSA-5635838">
    <property type="pathway name" value="Activation of SMO"/>
</dbReference>
<dbReference type="SignaLink" id="Q4KMG0"/>
<dbReference type="SIGNOR" id="Q4KMG0"/>
<dbReference type="BioGRID-ORCS" id="50937">
    <property type="hits" value="11 hits in 1143 CRISPR screens"/>
</dbReference>
<dbReference type="ChiTaRS" id="CDON">
    <property type="organism name" value="human"/>
</dbReference>
<dbReference type="EvolutionaryTrace" id="Q4KMG0"/>
<dbReference type="GeneWiki" id="CDON"/>
<dbReference type="GenomeRNAi" id="50937"/>
<dbReference type="Pharos" id="Q4KMG0">
    <property type="development level" value="Tbio"/>
</dbReference>
<dbReference type="PRO" id="PR:Q4KMG0"/>
<dbReference type="Proteomes" id="UP000005640">
    <property type="component" value="Chromosome 11"/>
</dbReference>
<dbReference type="RNAct" id="Q4KMG0">
    <property type="molecule type" value="protein"/>
</dbReference>
<dbReference type="Bgee" id="ENSG00000064309">
    <property type="expression patterns" value="Expressed in ventricular zone and 151 other cell types or tissues"/>
</dbReference>
<dbReference type="ExpressionAtlas" id="Q4KMG0">
    <property type="expression patterns" value="baseline and differential"/>
</dbReference>
<dbReference type="GO" id="GO:0005886">
    <property type="term" value="C:plasma membrane"/>
    <property type="evidence" value="ECO:0000304"/>
    <property type="project" value="Reactome"/>
</dbReference>
<dbReference type="GO" id="GO:0009952">
    <property type="term" value="P:anterior/posterior pattern specification"/>
    <property type="evidence" value="ECO:0007669"/>
    <property type="project" value="Ensembl"/>
</dbReference>
<dbReference type="GO" id="GO:0007155">
    <property type="term" value="P:cell adhesion"/>
    <property type="evidence" value="ECO:0000304"/>
    <property type="project" value="UniProtKB"/>
</dbReference>
<dbReference type="GO" id="GO:0001708">
    <property type="term" value="P:cell fate specification"/>
    <property type="evidence" value="ECO:0007669"/>
    <property type="project" value="Ensembl"/>
</dbReference>
<dbReference type="GO" id="GO:0098609">
    <property type="term" value="P:cell-cell adhesion"/>
    <property type="evidence" value="ECO:0000318"/>
    <property type="project" value="GO_Central"/>
</dbReference>
<dbReference type="GO" id="GO:0021953">
    <property type="term" value="P:central nervous system neuron differentiation"/>
    <property type="evidence" value="ECO:0007669"/>
    <property type="project" value="Ensembl"/>
</dbReference>
<dbReference type="GO" id="GO:0021987">
    <property type="term" value="P:cerebral cortex development"/>
    <property type="evidence" value="ECO:0007669"/>
    <property type="project" value="Ensembl"/>
</dbReference>
<dbReference type="GO" id="GO:0010172">
    <property type="term" value="P:embryonic body morphogenesis"/>
    <property type="evidence" value="ECO:0007669"/>
    <property type="project" value="Ensembl"/>
</dbReference>
<dbReference type="GO" id="GO:0060059">
    <property type="term" value="P:embryonic retina morphogenesis in camera-type eye"/>
    <property type="evidence" value="ECO:0007669"/>
    <property type="project" value="Ensembl"/>
</dbReference>
<dbReference type="GO" id="GO:0002088">
    <property type="term" value="P:lens development in camera-type eye"/>
    <property type="evidence" value="ECO:0007669"/>
    <property type="project" value="Ensembl"/>
</dbReference>
<dbReference type="GO" id="GO:0007520">
    <property type="term" value="P:myoblast fusion"/>
    <property type="evidence" value="ECO:0007669"/>
    <property type="project" value="Ensembl"/>
</dbReference>
<dbReference type="GO" id="GO:0007399">
    <property type="term" value="P:nervous system development"/>
    <property type="evidence" value="ECO:0000318"/>
    <property type="project" value="GO_Central"/>
</dbReference>
<dbReference type="GO" id="GO:0007405">
    <property type="term" value="P:neuroblast proliferation"/>
    <property type="evidence" value="ECO:0007669"/>
    <property type="project" value="Ensembl"/>
</dbReference>
<dbReference type="GO" id="GO:0043410">
    <property type="term" value="P:positive regulation of MAPK cascade"/>
    <property type="evidence" value="ECO:0007669"/>
    <property type="project" value="Ensembl"/>
</dbReference>
<dbReference type="GO" id="GO:0002052">
    <property type="term" value="P:positive regulation of neuroblast proliferation"/>
    <property type="evidence" value="ECO:0007669"/>
    <property type="project" value="Ensembl"/>
</dbReference>
<dbReference type="GO" id="GO:0045666">
    <property type="term" value="P:positive regulation of neuron differentiation"/>
    <property type="evidence" value="ECO:0007669"/>
    <property type="project" value="Ensembl"/>
</dbReference>
<dbReference type="GO" id="GO:0048643">
    <property type="term" value="P:positive regulation of skeletal muscle tissue development"/>
    <property type="evidence" value="ECO:0007669"/>
    <property type="project" value="Ensembl"/>
</dbReference>
<dbReference type="GO" id="GO:0051057">
    <property type="term" value="P:positive regulation of small GTPase mediated signal transduction"/>
    <property type="evidence" value="ECO:0007669"/>
    <property type="project" value="Ensembl"/>
</dbReference>
<dbReference type="GO" id="GO:0045944">
    <property type="term" value="P:positive regulation of transcription by RNA polymerase II"/>
    <property type="evidence" value="ECO:0007669"/>
    <property type="project" value="Ensembl"/>
</dbReference>
<dbReference type="GO" id="GO:0014816">
    <property type="term" value="P:skeletal muscle satellite cell differentiation"/>
    <property type="evidence" value="ECO:0007669"/>
    <property type="project" value="Ensembl"/>
</dbReference>
<dbReference type="GO" id="GO:0007224">
    <property type="term" value="P:smoothened signaling pathway"/>
    <property type="evidence" value="ECO:0007669"/>
    <property type="project" value="Ensembl"/>
</dbReference>
<dbReference type="CDD" id="cd00063">
    <property type="entry name" value="FN3"/>
    <property type="match status" value="3"/>
</dbReference>
<dbReference type="CDD" id="cd00096">
    <property type="entry name" value="Ig"/>
    <property type="match status" value="2"/>
</dbReference>
<dbReference type="FunFam" id="2.60.40.10:FF:000737">
    <property type="entry name" value="brother of CDO isoform X1"/>
    <property type="match status" value="1"/>
</dbReference>
<dbReference type="FunFam" id="2.60.40.10:FF:000205">
    <property type="entry name" value="Cell adhesion associated, oncogene regulated"/>
    <property type="match status" value="1"/>
</dbReference>
<dbReference type="FunFam" id="2.60.40.10:FF:000327">
    <property type="entry name" value="Cell adhesion associated, oncogene regulated"/>
    <property type="match status" value="1"/>
</dbReference>
<dbReference type="FunFam" id="2.60.40.10:FF:000352">
    <property type="entry name" value="Cell adhesion molecule-related/down-regulated by oncogenes"/>
    <property type="match status" value="1"/>
</dbReference>
<dbReference type="FunFam" id="2.60.40.10:FF:000788">
    <property type="entry name" value="Cell adhesion molecule-related/down-regulated by oncogenes"/>
    <property type="match status" value="1"/>
</dbReference>
<dbReference type="FunFam" id="2.60.40.10:FF:001305">
    <property type="entry name" value="Cell adhesion molecule-related/down-regulated by oncogenes"/>
    <property type="match status" value="1"/>
</dbReference>
<dbReference type="FunFam" id="2.60.40.10:FF:000273">
    <property type="entry name" value="contactin-3 isoform X1"/>
    <property type="match status" value="1"/>
</dbReference>
<dbReference type="FunFam" id="2.60.40.10:FF:000032">
    <property type="entry name" value="palladin isoform X1"/>
    <property type="match status" value="1"/>
</dbReference>
<dbReference type="Gene3D" id="2.60.40.10">
    <property type="entry name" value="Immunoglobulins"/>
    <property type="match status" value="8"/>
</dbReference>
<dbReference type="InterPro" id="IPR003961">
    <property type="entry name" value="FN3_dom"/>
</dbReference>
<dbReference type="InterPro" id="IPR036116">
    <property type="entry name" value="FN3_sf"/>
</dbReference>
<dbReference type="InterPro" id="IPR007110">
    <property type="entry name" value="Ig-like_dom"/>
</dbReference>
<dbReference type="InterPro" id="IPR036179">
    <property type="entry name" value="Ig-like_dom_sf"/>
</dbReference>
<dbReference type="InterPro" id="IPR013783">
    <property type="entry name" value="Ig-like_fold"/>
</dbReference>
<dbReference type="InterPro" id="IPR013098">
    <property type="entry name" value="Ig_I-set"/>
</dbReference>
<dbReference type="InterPro" id="IPR003599">
    <property type="entry name" value="Ig_sub"/>
</dbReference>
<dbReference type="InterPro" id="IPR003598">
    <property type="entry name" value="Ig_sub2"/>
</dbReference>
<dbReference type="PANTHER" id="PTHR44170:SF1">
    <property type="entry name" value="CELL ADHESION MOLECULE-RELATED_DOWN-REGULATED BY ONCOGENES"/>
    <property type="match status" value="1"/>
</dbReference>
<dbReference type="PANTHER" id="PTHR44170">
    <property type="entry name" value="PROTEIN SIDEKICK"/>
    <property type="match status" value="1"/>
</dbReference>
<dbReference type="Pfam" id="PF00041">
    <property type="entry name" value="fn3"/>
    <property type="match status" value="3"/>
</dbReference>
<dbReference type="Pfam" id="PF07679">
    <property type="entry name" value="I-set"/>
    <property type="match status" value="2"/>
</dbReference>
<dbReference type="Pfam" id="PF13927">
    <property type="entry name" value="Ig_3"/>
    <property type="match status" value="2"/>
</dbReference>
<dbReference type="SMART" id="SM00060">
    <property type="entry name" value="FN3"/>
    <property type="match status" value="3"/>
</dbReference>
<dbReference type="SMART" id="SM00409">
    <property type="entry name" value="IG"/>
    <property type="match status" value="5"/>
</dbReference>
<dbReference type="SMART" id="SM00408">
    <property type="entry name" value="IGc2"/>
    <property type="match status" value="5"/>
</dbReference>
<dbReference type="SUPFAM" id="SSF49265">
    <property type="entry name" value="Fibronectin type III"/>
    <property type="match status" value="2"/>
</dbReference>
<dbReference type="SUPFAM" id="SSF48726">
    <property type="entry name" value="Immunoglobulin"/>
    <property type="match status" value="5"/>
</dbReference>
<dbReference type="PROSITE" id="PS50853">
    <property type="entry name" value="FN3"/>
    <property type="match status" value="3"/>
</dbReference>
<dbReference type="PROSITE" id="PS50835">
    <property type="entry name" value="IG_LIKE"/>
    <property type="match status" value="5"/>
</dbReference>
<reference key="1">
    <citation type="journal article" date="1997" name="J. Cell Biol.">
        <title>CDO: an oncogene-, serum-, and anchorage-regulated member of the Ig/fibronectin type III repeat family.</title>
        <authorList>
            <person name="Kang J.-S."/>
            <person name="Gao M."/>
            <person name="Feinleib J.L."/>
            <person name="Cotter P.D."/>
            <person name="Guadagno S.N."/>
            <person name="Krauss R.S."/>
        </authorList>
    </citation>
    <scope>NUCLEOTIDE SEQUENCE [MRNA] (ISOFORM 2)</scope>
    <source>
        <tissue>Fetal brain</tissue>
        <tissue>Fetal lung</tissue>
    </source>
</reference>
<reference key="2">
    <citation type="journal article" date="2006" name="Nature">
        <title>Human chromosome 11 DNA sequence and analysis including novel gene identification.</title>
        <authorList>
            <person name="Taylor T.D."/>
            <person name="Noguchi H."/>
            <person name="Totoki Y."/>
            <person name="Toyoda A."/>
            <person name="Kuroki Y."/>
            <person name="Dewar K."/>
            <person name="Lloyd C."/>
            <person name="Itoh T."/>
            <person name="Takeda T."/>
            <person name="Kim D.-W."/>
            <person name="She X."/>
            <person name="Barlow K.F."/>
            <person name="Bloom T."/>
            <person name="Bruford E."/>
            <person name="Chang J.L."/>
            <person name="Cuomo C.A."/>
            <person name="Eichler E."/>
            <person name="FitzGerald M.G."/>
            <person name="Jaffe D.B."/>
            <person name="LaButti K."/>
            <person name="Nicol R."/>
            <person name="Park H.-S."/>
            <person name="Seaman C."/>
            <person name="Sougnez C."/>
            <person name="Yang X."/>
            <person name="Zimmer A.R."/>
            <person name="Zody M.C."/>
            <person name="Birren B.W."/>
            <person name="Nusbaum C."/>
            <person name="Fujiyama A."/>
            <person name="Hattori M."/>
            <person name="Rogers J."/>
            <person name="Lander E.S."/>
            <person name="Sakaki Y."/>
        </authorList>
    </citation>
    <scope>NUCLEOTIDE SEQUENCE [LARGE SCALE GENOMIC DNA]</scope>
</reference>
<reference key="3">
    <citation type="journal article" date="2004" name="Genome Res.">
        <title>The status, quality, and expansion of the NIH full-length cDNA project: the Mammalian Gene Collection (MGC).</title>
        <authorList>
            <consortium name="The MGC Project Team"/>
        </authorList>
    </citation>
    <scope>NUCLEOTIDE SEQUENCE [LARGE SCALE MRNA] (ISOFORM 1)</scope>
    <source>
        <tissue>Placenta</tissue>
    </source>
</reference>
<reference key="4">
    <citation type="journal article" date="2008" name="Nature">
        <title>The mode of Hedgehog binding to Ihog homologues is not conserved across different phyla.</title>
        <authorList>
            <person name="McLellan J.S."/>
            <person name="Zheng X."/>
            <person name="Hauk G."/>
            <person name="Ghirlando R."/>
            <person name="Beachy P.A."/>
            <person name="Leahy D.J."/>
        </authorList>
    </citation>
    <scope>X-RAY CRYSTALLOGRAPHY (1.7 ANGSTROMS) OF 826-924 IN COMPLEX WITH SHH</scope>
    <scope>INTERACTION WITH SHH</scope>
</reference>
<reference key="5">
    <citation type="journal article" date="2010" name="J. Biol. Chem.">
        <title>All mammalian Hedgehog proteins interact with cell adhesion molecule, down-regulated by oncogenes (CDO) and brother of CDO (BOC) in a conserved manner.</title>
        <authorList>
            <person name="Kavran J.M."/>
            <person name="Ward M.D."/>
            <person name="Oladosu O.O."/>
            <person name="Mulepati S."/>
            <person name="Leahy D.J."/>
        </authorList>
    </citation>
    <scope>X-RAY CRYSTALLOGRAPHY (1.6 ANGSTROMS) OF 826-924 IN COMPLEXES WITH IHH AND DHH</scope>
    <scope>INTERACTION WITH IHH AND DHH</scope>
</reference>
<reference key="6">
    <citation type="journal article" date="2011" name="Am. J. Hum. Genet.">
        <title>Mutations in CDON, encoding a hedgehog receptor, result in holoprosencephaly and defective interactions with other hedgehog receptors.</title>
        <authorList>
            <person name="Bae G.U."/>
            <person name="Domene S."/>
            <person name="Roessler E."/>
            <person name="Schachter K."/>
            <person name="Kang J.S."/>
            <person name="Muenke M."/>
            <person name="Krauss R.S."/>
        </authorList>
    </citation>
    <scope>VARIANTS HPE11 SER-684; ALA-689; MET-691; GLU-780; ALA-790 AND ARG-940</scope>
</reference>
<proteinExistence type="evidence at protein level"/>
<comment type="function">
    <text evidence="1">Component of a cell-surface receptor complex that mediates cell-cell interactions between muscle precursor cells. Promotes differentiation of myogenic cells (By similarity).</text>
</comment>
<comment type="subunit">
    <text evidence="1 6 7">Part of a complex that contains BOC, CDON, NEO1, cadherins and CTNNB1. Interacts with NTN3 (By similarity). Interacts with PTCH1 (By similarity). Interacts with GAS1 (By similarity). Interacts with DHH, IHH and SHH.</text>
</comment>
<comment type="interaction">
    <interactant intactId="EBI-7016840">
        <id>Q4KMG0</id>
    </interactant>
    <interactant intactId="EBI-375543">
        <id>P00519</id>
        <label>ABL1</label>
    </interactant>
    <organismsDiffer>false</organismsDiffer>
    <experiments>2</experiments>
</comment>
<comment type="interaction">
    <interactant intactId="EBI-7016840">
        <id>Q4KMG0</id>
    </interactant>
    <interactant intactId="EBI-11667804">
        <id>O43323</id>
        <label>DHH</label>
    </interactant>
    <organismsDiffer>false</organismsDiffer>
    <experiments>2</experiments>
</comment>
<comment type="interaction">
    <interactant intactId="EBI-7016840">
        <id>Q4KMG0</id>
    </interactant>
    <interactant intactId="EBI-8775406">
        <id>Q13635</id>
        <label>PTCH1</label>
    </interactant>
    <organismsDiffer>false</organismsDiffer>
    <experiments>2</experiments>
</comment>
<comment type="interaction">
    <interactant intactId="EBI-7016840">
        <id>Q4KMG0</id>
    </interactant>
    <interactant intactId="EBI-15610166">
        <id>Q62226</id>
        <label>Shh</label>
    </interactant>
    <organismsDiffer>true</organismsDiffer>
    <experiments>7</experiments>
</comment>
<comment type="subcellular location">
    <subcellularLocation>
        <location evidence="1">Cell membrane</location>
        <topology evidence="1">Single-pass membrane protein</topology>
    </subcellularLocation>
</comment>
<comment type="alternative products">
    <event type="alternative splicing"/>
    <isoform>
        <id>Q4KMG0-1</id>
        <name>1</name>
        <sequence type="displayed"/>
    </isoform>
    <isoform>
        <id>Q4KMG0-2</id>
        <name>2</name>
        <sequence type="described" ref="VSP_018201"/>
    </isoform>
</comment>
<comment type="PTM">
    <text evidence="1">N-glycosylated.</text>
</comment>
<comment type="disease" evidence="8">
    <disease id="DI-03230">
        <name>Holoprosencephaly 11</name>
        <acronym>HPE11</acronym>
        <description>A structural anomaly of the brain, in which the developing forebrain fails to correctly separate into right and left hemispheres. Holoprosencephaly is genetically heterogeneous and associated with several distinct facies and phenotypic variability.</description>
        <dbReference type="MIM" id="614226"/>
    </disease>
    <text>The disease is caused by variants affecting the gene represented in this entry.</text>
</comment>
<evidence type="ECO:0000250" key="1"/>
<evidence type="ECO:0000255" key="2"/>
<evidence type="ECO:0000255" key="3">
    <source>
        <dbReference type="PROSITE-ProRule" id="PRU00114"/>
    </source>
</evidence>
<evidence type="ECO:0000255" key="4">
    <source>
        <dbReference type="PROSITE-ProRule" id="PRU00316"/>
    </source>
</evidence>
<evidence type="ECO:0000256" key="5">
    <source>
        <dbReference type="SAM" id="MobiDB-lite"/>
    </source>
</evidence>
<evidence type="ECO:0000269" key="6">
    <source>
    </source>
</evidence>
<evidence type="ECO:0000269" key="7">
    <source>
    </source>
</evidence>
<evidence type="ECO:0000269" key="8">
    <source>
    </source>
</evidence>
<evidence type="ECO:0000303" key="9">
    <source>
    </source>
</evidence>
<evidence type="ECO:0000305" key="10"/>
<evidence type="ECO:0007829" key="11">
    <source>
        <dbReference type="PDB" id="3N1F"/>
    </source>
</evidence>
<sequence length="1287" mass="139147">MHPDLGPLCTLLYVTLTILCSSVSSDLAPYFTSEPLSAVQKLGGPVVLHCSAQPVTTRISWLHNGKTLDGNLEHVKIHQGTLTILSLNSSLLGYYQCLANNSIGAIVSGPATVSVAVLGDFGSSTKHVITAEEKSAGFIGCRVPESNPKAEVRYKIRGKWLEHSTENYLILPSGNLQILNVSLEDKGSYKCAAYNPVTHQLKVEPIGRKLLVSRPSSDDVHILHPTHSQALAVLSRSPVTLECVVSGVPAPQVYWLKDGQDIAPGSNWRRLYSHLATDSVDPADSGNYSCMAGNKSGDVKYVTYMVNVLEHASISKGLQDQIVSLGATVHFTCDVHGNPAPNCTWFHNAQPIHPSARHLTAGNGLKISGVTVEDVGMYQCVADNGIGFMHSTGRLEIENDGGFKPVIITAPVSAKVADGDFVTLSCNASGLPVPVIRWYDSHGLITSHPSQVLRSKSRKSQLSRPEGLNLEPVYFVLSQAGASSLHIQAVTQEHAGKYICEAANEHGTTQAEASLMVVPFETNTKAETVTLPDAAQNDDRSKRDGSETGLLSSFPVKVHPSAVESAPEKNASGISVPDAPIILSPPQTHTPDTYNLVWRAGKDGGLPINAYFVKYRKLDDGVGMLGSWHTVRVPGSENELHLAELEPSSLYEVLMVARSAAGEGQPAMLTFRTSKEKTASSKNTQASSPPVGIPKYPVVSEAANNNFGVVLTDSSRHSGVPEAPDRPTISTASETSVYVTWIPRANGGSPITAFKVEYKRMRTSNWLVAAEDIPPSKLSVEVRSLEPGSTYKFRVIAINHYGESFRSSASRPYQVVGFPNRFSSRPITGPHIAYTEAVSDTQIMLKWTYIPSSNNNTPIQGFYIYYRPTDSDNDSDYKRDVVEGSKQWHMIGHLQPETSYDIKMQCFNEGGESEFSNVMICETKVKRVPGASEYPVKDLSTPPNSLGSGGNVGPATSPARSSDMLYLIVGCVLGVMVLILMVFIAMCLWKNRQQNTIQKYDPPGYLYQGSDMNGQMVDYTTLSGASQINGNVHGGFLTNGGLSSGYSHLHHKVPNAVNGIVNGSLNGGLYSGHSNSLTRTHVDFEHPHHLVNGGGMYTAVPQIDPLECVNCRNCRNNNRCFTKTNSTFSSSPPPVVPVVAPYPQDGLEMKPLSHVKVPVCLTSAVPDCGQLPEESVKDNVEPVPTQRTCCQDIVNDVSSDGSEDPAEFSRGQEGMINLRIPDHLQLAKSCVWEGDSCAHSETEINIVSWNALILPPVPEGCAEKTMWSPPGIPLDSPTEVLQQPRET</sequence>
<protein>
    <recommendedName>
        <fullName>Cell adhesion molecule-related/down-regulated by oncogenes</fullName>
    </recommendedName>
</protein>
<feature type="signal peptide" evidence="2">
    <location>
        <begin position="1"/>
        <end position="25"/>
    </location>
</feature>
<feature type="chain" id="PRO_0000234054" description="Cell adhesion molecule-related/down-regulated by oncogenes">
    <location>
        <begin position="26"/>
        <end position="1287"/>
    </location>
</feature>
<feature type="topological domain" description="Extracellular" evidence="2">
    <location>
        <begin position="26"/>
        <end position="963"/>
    </location>
</feature>
<feature type="transmembrane region" description="Helical" evidence="2">
    <location>
        <begin position="964"/>
        <end position="984"/>
    </location>
</feature>
<feature type="topological domain" description="Cytoplasmic" evidence="2">
    <location>
        <begin position="985"/>
        <end position="1287"/>
    </location>
</feature>
<feature type="domain" description="Ig-like C2-type 1">
    <location>
        <begin position="29"/>
        <end position="114"/>
    </location>
</feature>
<feature type="domain" description="Ig-like C2-type 2">
    <location>
        <begin position="120"/>
        <end position="204"/>
    </location>
</feature>
<feature type="domain" description="Ig-like C2-type 3">
    <location>
        <begin position="225"/>
        <end position="303"/>
    </location>
</feature>
<feature type="domain" description="Ig-like C2-type 4">
    <location>
        <begin position="310"/>
        <end position="396"/>
    </location>
</feature>
<feature type="domain" description="Ig-like C2-type 5">
    <location>
        <begin position="405"/>
        <end position="516"/>
    </location>
</feature>
<feature type="domain" description="Fibronectin type-III 1" evidence="4">
    <location>
        <begin position="579"/>
        <end position="677"/>
    </location>
</feature>
<feature type="domain" description="Fibronectin type-III 2" evidence="4">
    <location>
        <begin position="723"/>
        <end position="821"/>
    </location>
</feature>
<feature type="domain" description="Fibronectin type-III 3" evidence="4">
    <location>
        <begin position="826"/>
        <end position="926"/>
    </location>
</feature>
<feature type="region of interest" description="Disordered" evidence="5">
    <location>
        <begin position="531"/>
        <end position="553"/>
    </location>
</feature>
<feature type="region of interest" description="Disordered" evidence="5">
    <location>
        <begin position="933"/>
        <end position="955"/>
    </location>
</feature>
<feature type="region of interest" description="Disordered" evidence="5">
    <location>
        <begin position="1268"/>
        <end position="1287"/>
    </location>
</feature>
<feature type="compositionally biased region" description="Basic and acidic residues" evidence="5">
    <location>
        <begin position="537"/>
        <end position="546"/>
    </location>
</feature>
<feature type="glycosylation site" description="N-linked (GlcNAc...) asparagine" evidence="2">
    <location>
        <position position="88"/>
    </location>
</feature>
<feature type="glycosylation site" description="N-linked (GlcNAc...) asparagine" evidence="2">
    <location>
        <position position="100"/>
    </location>
</feature>
<feature type="glycosylation site" description="N-linked (GlcNAc...) asparagine" evidence="2">
    <location>
        <position position="180"/>
    </location>
</feature>
<feature type="glycosylation site" description="N-linked (GlcNAc...) asparagine" evidence="2">
    <location>
        <position position="287"/>
    </location>
</feature>
<feature type="glycosylation site" description="N-linked (GlcNAc...) asparagine" evidence="2">
    <location>
        <position position="294"/>
    </location>
</feature>
<feature type="glycosylation site" description="N-linked (GlcNAc...) asparagine" evidence="2">
    <location>
        <position position="342"/>
    </location>
</feature>
<feature type="glycosylation site" description="N-linked (GlcNAc...) asparagine" evidence="2">
    <location>
        <position position="427"/>
    </location>
</feature>
<feature type="glycosylation site" description="N-linked (GlcNAc...) asparagine" evidence="2">
    <location>
        <position position="570"/>
    </location>
</feature>
<feature type="glycosylation site" description="N-linked (GlcNAc...) asparagine" evidence="2">
    <location>
        <position position="873"/>
    </location>
</feature>
<feature type="disulfide bond" evidence="3">
    <location>
        <begin position="50"/>
        <end position="97"/>
    </location>
</feature>
<feature type="disulfide bond" evidence="3">
    <location>
        <begin position="141"/>
        <end position="191"/>
    </location>
</feature>
<feature type="disulfide bond" evidence="3">
    <location>
        <begin position="243"/>
        <end position="290"/>
    </location>
</feature>
<feature type="disulfide bond" evidence="3">
    <location>
        <begin position="333"/>
        <end position="380"/>
    </location>
</feature>
<feature type="disulfide bond" evidence="3">
    <location>
        <begin position="426"/>
        <end position="500"/>
    </location>
</feature>
<feature type="splice variant" id="VSP_018201" description="In isoform 2." evidence="9">
    <location>
        <begin position="1212"/>
        <end position="1234"/>
    </location>
</feature>
<feature type="sequence variant" id="VAR_056038" description="In dbSNP:rs7122277.">
    <original>K</original>
    <variation>R</variation>
    <location>
        <position position="66"/>
    </location>
</feature>
<feature type="sequence variant" id="VAR_056039" description="In dbSNP:rs3740909.">
    <original>E</original>
    <variation>K</variation>
    <location>
        <position position="162"/>
    </location>
</feature>
<feature type="sequence variant" id="VAR_056040" description="In dbSNP:rs35665264.">
    <original>P</original>
    <variation>A</variation>
    <location>
        <position position="351"/>
    </location>
</feature>
<feature type="sequence variant" id="VAR_066497" description="In HPE11; benign; dbSNP:rs145983470." evidence="8">
    <original>T</original>
    <variation>S</variation>
    <location>
        <position position="684"/>
    </location>
</feature>
<feature type="sequence variant" id="VAR_056041" description="In dbSNP:rs12274923.">
    <original>A</original>
    <variation>V</variation>
    <location>
        <position position="686"/>
    </location>
</feature>
<feature type="sequence variant" id="VAR_066498" description="In HPE11; dbSNP:rs387906995." evidence="8">
    <original>P</original>
    <variation>A</variation>
    <location>
        <position position="689"/>
    </location>
</feature>
<feature type="sequence variant" id="VAR_066499" description="In HPE11; dbSNP:rs139323558." evidence="8">
    <original>V</original>
    <variation>M</variation>
    <location>
        <position position="691"/>
    </location>
</feature>
<feature type="sequence variant" id="VAR_066500" description="In HPE11; dbSNP:rs387906996." evidence="8">
    <original>V</original>
    <variation>E</variation>
    <location>
        <position position="780"/>
    </location>
</feature>
<feature type="sequence variant" id="VAR_066501" description="In HPE11; dbSNP:rs387906997." evidence="8">
    <original>T</original>
    <variation>A</variation>
    <location>
        <position position="790"/>
    </location>
</feature>
<feature type="sequence variant" id="VAR_066502" description="In HPE11; dbSNP:rs369673018." evidence="8">
    <original>S</original>
    <variation>R</variation>
    <location>
        <position position="940"/>
    </location>
</feature>
<feature type="sequence conflict" description="In Ref. 1; AAC34901 and 3; AAH98583." evidence="10" ref="1 3">
    <original>V</original>
    <variation>I</variation>
    <location>
        <position position="75"/>
    </location>
</feature>
<feature type="sequence conflict" description="In Ref. 3; AAH98583." evidence="10" ref="3">
    <original>G</original>
    <variation>E</variation>
    <location>
        <position position="265"/>
    </location>
</feature>
<feature type="sequence conflict" description="In Ref. 1; AAC34901." evidence="10" ref="1">
    <original>K</original>
    <variation>E</variation>
    <location>
        <position position="300"/>
    </location>
</feature>
<feature type="sequence conflict" description="In Ref. 1; AAC34901." evidence="10" ref="1">
    <original>L</original>
    <variation>I</variation>
    <location>
        <position position="669"/>
    </location>
</feature>
<feature type="sequence conflict" description="In Ref. 3; AAH98583." evidence="10" ref="3">
    <original>I</original>
    <variation>N</variation>
    <location>
        <position position="1244"/>
    </location>
</feature>
<feature type="strand" evidence="11">
    <location>
        <begin position="831"/>
        <end position="837"/>
    </location>
</feature>
<feature type="strand" evidence="11">
    <location>
        <begin position="839"/>
        <end position="841"/>
    </location>
</feature>
<feature type="strand" evidence="11">
    <location>
        <begin position="843"/>
        <end position="848"/>
    </location>
</feature>
<feature type="helix" evidence="11">
    <location>
        <begin position="852"/>
        <end position="854"/>
    </location>
</feature>
<feature type="strand" evidence="11">
    <location>
        <begin position="861"/>
        <end position="868"/>
    </location>
</feature>
<feature type="helix" evidence="11">
    <location>
        <begin position="874"/>
        <end position="876"/>
    </location>
</feature>
<feature type="strand" evidence="11">
    <location>
        <begin position="878"/>
        <end position="883"/>
    </location>
</feature>
<feature type="strand" evidence="11">
    <location>
        <begin position="887"/>
        <end position="891"/>
    </location>
</feature>
<feature type="strand" evidence="11">
    <location>
        <begin position="899"/>
        <end position="908"/>
    </location>
</feature>
<feature type="strand" evidence="11">
    <location>
        <begin position="919"/>
        <end position="922"/>
    </location>
</feature>
<accession>Q4KMG0</accession>
<accession>O14631</accession>
<organism>
    <name type="scientific">Homo sapiens</name>
    <name type="common">Human</name>
    <dbReference type="NCBI Taxonomy" id="9606"/>
    <lineage>
        <taxon>Eukaryota</taxon>
        <taxon>Metazoa</taxon>
        <taxon>Chordata</taxon>
        <taxon>Craniata</taxon>
        <taxon>Vertebrata</taxon>
        <taxon>Euteleostomi</taxon>
        <taxon>Mammalia</taxon>
        <taxon>Eutheria</taxon>
        <taxon>Euarchontoglires</taxon>
        <taxon>Primates</taxon>
        <taxon>Haplorrhini</taxon>
        <taxon>Catarrhini</taxon>
        <taxon>Hominidae</taxon>
        <taxon>Homo</taxon>
    </lineage>
</organism>
<keyword id="KW-0002">3D-structure</keyword>
<keyword id="KW-0025">Alternative splicing</keyword>
<keyword id="KW-1003">Cell membrane</keyword>
<keyword id="KW-0225">Disease variant</keyword>
<keyword id="KW-1015">Disulfide bond</keyword>
<keyword id="KW-0325">Glycoprotein</keyword>
<keyword id="KW-0370">Holoprosencephaly</keyword>
<keyword id="KW-0393">Immunoglobulin domain</keyword>
<keyword id="KW-0472">Membrane</keyword>
<keyword id="KW-1267">Proteomics identification</keyword>
<keyword id="KW-1185">Reference proteome</keyword>
<keyword id="KW-0677">Repeat</keyword>
<keyword id="KW-0732">Signal</keyword>
<keyword id="KW-0812">Transmembrane</keyword>
<keyword id="KW-1133">Transmembrane helix</keyword>